<reference key="1">
    <citation type="journal article" date="2006" name="BMC Evol. Biol.">
        <title>Phylogenetic analyses of Vitis (Vitaceae) based on complete chloroplast genome sequences: effects of taxon sampling and phylogenetic methods on resolving relationships among rosids.</title>
        <authorList>
            <person name="Jansen R.K."/>
            <person name="Kaittanis C."/>
            <person name="Lee S.-B."/>
            <person name="Saski C."/>
            <person name="Tomkins J."/>
            <person name="Alverson A.J."/>
            <person name="Daniell H."/>
        </authorList>
    </citation>
    <scope>NUCLEOTIDE SEQUENCE [LARGE SCALE GENOMIC DNA]</scope>
    <source>
        <strain>cv. Maxxa</strain>
    </source>
</reference>
<geneLocation type="chloroplast"/>
<feature type="chain" id="PRO_0000276708" description="Small ribosomal subunit protein uS14c">
    <location>
        <begin position="1"/>
        <end position="100"/>
    </location>
</feature>
<name>RR14_VITVI</name>
<organism>
    <name type="scientific">Vitis vinifera</name>
    <name type="common">Grape</name>
    <dbReference type="NCBI Taxonomy" id="29760"/>
    <lineage>
        <taxon>Eukaryota</taxon>
        <taxon>Viridiplantae</taxon>
        <taxon>Streptophyta</taxon>
        <taxon>Embryophyta</taxon>
        <taxon>Tracheophyta</taxon>
        <taxon>Spermatophyta</taxon>
        <taxon>Magnoliopsida</taxon>
        <taxon>eudicotyledons</taxon>
        <taxon>Gunneridae</taxon>
        <taxon>Pentapetalae</taxon>
        <taxon>rosids</taxon>
        <taxon>Vitales</taxon>
        <taxon>Vitaceae</taxon>
        <taxon>Viteae</taxon>
        <taxon>Vitis</taxon>
    </lineage>
</organism>
<proteinExistence type="inferred from homology"/>
<evidence type="ECO:0000255" key="1">
    <source>
        <dbReference type="HAMAP-Rule" id="MF_00537"/>
    </source>
</evidence>
<evidence type="ECO:0000305" key="2"/>
<accession>Q0ZJ22</accession>
<gene>
    <name evidence="1" type="primary">rps14</name>
</gene>
<comment type="function">
    <text evidence="1">Binds 16S rRNA, required for the assembly of 30S particles.</text>
</comment>
<comment type="subunit">
    <text evidence="1">Part of the 30S ribosomal subunit.</text>
</comment>
<comment type="subcellular location">
    <subcellularLocation>
        <location>Plastid</location>
        <location>Chloroplast</location>
    </subcellularLocation>
</comment>
<comment type="similarity">
    <text evidence="1">Belongs to the universal ribosomal protein uS14 family.</text>
</comment>
<sequence>MARKSLIQRERKRQKLEQKYHLIRRSSKKEISKVPSLSDKWEIHGKLQSSPRNSAPTRLHRRCFLTGRPGANYRYFGLSGHILREMVHACLLPGATRSSW</sequence>
<keyword id="KW-0150">Chloroplast</keyword>
<keyword id="KW-0934">Plastid</keyword>
<keyword id="KW-1185">Reference proteome</keyword>
<keyword id="KW-0687">Ribonucleoprotein</keyword>
<keyword id="KW-0689">Ribosomal protein</keyword>
<keyword id="KW-0694">RNA-binding</keyword>
<keyword id="KW-0699">rRNA-binding</keyword>
<dbReference type="EMBL" id="DQ424856">
    <property type="protein sequence ID" value="ABE47532.1"/>
    <property type="molecule type" value="Genomic_DNA"/>
</dbReference>
<dbReference type="RefSeq" id="YP_567074.1">
    <property type="nucleotide sequence ID" value="NC_007957.1"/>
</dbReference>
<dbReference type="SMR" id="Q0ZJ22"/>
<dbReference type="FunCoup" id="Q0ZJ22">
    <property type="interactions" value="46"/>
</dbReference>
<dbReference type="STRING" id="29760.Q0ZJ22"/>
<dbReference type="PaxDb" id="29760-VIT_16s0039g00380.t01"/>
<dbReference type="EnsemblPlants" id="Vitvi00g04112_t001">
    <property type="protein sequence ID" value="Vitvi00g04112_P001"/>
    <property type="gene ID" value="Vitvi00g04112"/>
</dbReference>
<dbReference type="EnsemblPlants" id="Vitvi15g04286_t001">
    <property type="protein sequence ID" value="Vitvi15g04286_P001"/>
    <property type="gene ID" value="Vitvi15g04286"/>
</dbReference>
<dbReference type="GeneID" id="4025089"/>
<dbReference type="Gramene" id="Vitvi00g04112_t001">
    <property type="protein sequence ID" value="Vitvi00g04112_P001"/>
    <property type="gene ID" value="Vitvi00g04112"/>
</dbReference>
<dbReference type="Gramene" id="Vitvi15g04286_t001">
    <property type="protein sequence ID" value="Vitvi15g04286_P001"/>
    <property type="gene ID" value="Vitvi15g04286"/>
</dbReference>
<dbReference type="KEGG" id="vvi:4025089"/>
<dbReference type="eggNOG" id="KOG1741">
    <property type="taxonomic scope" value="Eukaryota"/>
</dbReference>
<dbReference type="InParanoid" id="Q0ZJ22"/>
<dbReference type="OrthoDB" id="413436at2759"/>
<dbReference type="Proteomes" id="UP000009183">
    <property type="component" value="Chloroplast"/>
</dbReference>
<dbReference type="ExpressionAtlas" id="Q0ZJ22">
    <property type="expression patterns" value="baseline"/>
</dbReference>
<dbReference type="GO" id="GO:0009507">
    <property type="term" value="C:chloroplast"/>
    <property type="evidence" value="ECO:0007669"/>
    <property type="project" value="UniProtKB-SubCell"/>
</dbReference>
<dbReference type="GO" id="GO:0015935">
    <property type="term" value="C:small ribosomal subunit"/>
    <property type="evidence" value="ECO:0000318"/>
    <property type="project" value="GO_Central"/>
</dbReference>
<dbReference type="GO" id="GO:0019843">
    <property type="term" value="F:rRNA binding"/>
    <property type="evidence" value="ECO:0007669"/>
    <property type="project" value="UniProtKB-UniRule"/>
</dbReference>
<dbReference type="GO" id="GO:0003735">
    <property type="term" value="F:structural constituent of ribosome"/>
    <property type="evidence" value="ECO:0000318"/>
    <property type="project" value="GO_Central"/>
</dbReference>
<dbReference type="GO" id="GO:0006412">
    <property type="term" value="P:translation"/>
    <property type="evidence" value="ECO:0000318"/>
    <property type="project" value="GO_Central"/>
</dbReference>
<dbReference type="FunFam" id="1.10.287.1480:FF:000001">
    <property type="entry name" value="30S ribosomal protein S14"/>
    <property type="match status" value="1"/>
</dbReference>
<dbReference type="Gene3D" id="1.10.287.1480">
    <property type="match status" value="1"/>
</dbReference>
<dbReference type="HAMAP" id="MF_00537">
    <property type="entry name" value="Ribosomal_uS14_1"/>
    <property type="match status" value="1"/>
</dbReference>
<dbReference type="InterPro" id="IPR001209">
    <property type="entry name" value="Ribosomal_uS14"/>
</dbReference>
<dbReference type="InterPro" id="IPR023036">
    <property type="entry name" value="Ribosomal_uS14_bac/plastid"/>
</dbReference>
<dbReference type="InterPro" id="IPR018271">
    <property type="entry name" value="Ribosomal_uS14_CS"/>
</dbReference>
<dbReference type="NCBIfam" id="NF006477">
    <property type="entry name" value="PRK08881.1"/>
    <property type="match status" value="1"/>
</dbReference>
<dbReference type="PANTHER" id="PTHR19836">
    <property type="entry name" value="30S RIBOSOMAL PROTEIN S14"/>
    <property type="match status" value="1"/>
</dbReference>
<dbReference type="PANTHER" id="PTHR19836:SF19">
    <property type="entry name" value="SMALL RIBOSOMAL SUBUNIT PROTEIN US14M"/>
    <property type="match status" value="1"/>
</dbReference>
<dbReference type="Pfam" id="PF00253">
    <property type="entry name" value="Ribosomal_S14"/>
    <property type="match status" value="1"/>
</dbReference>
<dbReference type="SUPFAM" id="SSF57716">
    <property type="entry name" value="Glucocorticoid receptor-like (DNA-binding domain)"/>
    <property type="match status" value="1"/>
</dbReference>
<dbReference type="PROSITE" id="PS00527">
    <property type="entry name" value="RIBOSOMAL_S14"/>
    <property type="match status" value="1"/>
</dbReference>
<protein>
    <recommendedName>
        <fullName evidence="1">Small ribosomal subunit protein uS14c</fullName>
    </recommendedName>
    <alternativeName>
        <fullName evidence="2">30S ribosomal protein S14, chloroplastic</fullName>
    </alternativeName>
</protein>